<evidence type="ECO:0000250" key="1">
    <source>
        <dbReference type="UniProtKB" id="P36152"/>
    </source>
</evidence>
<evidence type="ECO:0000250" key="2">
    <source>
        <dbReference type="UniProtKB" id="Q8WTY4"/>
    </source>
</evidence>
<evidence type="ECO:0000255" key="3">
    <source>
        <dbReference type="HAMAP-Rule" id="MF_03115"/>
    </source>
</evidence>
<evidence type="ECO:0000269" key="4">
    <source>
    </source>
</evidence>
<evidence type="ECO:0000269" key="5">
    <source>
    </source>
</evidence>
<evidence type="ECO:0000269" key="6">
    <source>
    </source>
</evidence>
<evidence type="ECO:0000269" key="7">
    <source>
    </source>
</evidence>
<evidence type="ECO:0000269" key="8">
    <source>
    </source>
</evidence>
<evidence type="ECO:0000269" key="9">
    <source>
    </source>
</evidence>
<evidence type="ECO:0000269" key="10">
    <source>
    </source>
</evidence>
<evidence type="ECO:0000269" key="11">
    <source>
    </source>
</evidence>
<evidence type="ECO:0000269" key="12">
    <source>
    </source>
</evidence>
<evidence type="ECO:0000269" key="13">
    <source>
    </source>
</evidence>
<evidence type="ECO:0000303" key="14">
    <source>
    </source>
</evidence>
<evidence type="ECO:0000303" key="15">
    <source>
    </source>
</evidence>
<evidence type="ECO:0000303" key="16">
    <source>
    </source>
</evidence>
<evidence type="ECO:0000303" key="17">
    <source ref="4"/>
</evidence>
<evidence type="ECO:0000305" key="18"/>
<evidence type="ECO:0000305" key="19">
    <source>
    </source>
</evidence>
<evidence type="ECO:0007744" key="20">
    <source>
    </source>
</evidence>
<evidence type="ECO:0007744" key="21">
    <source>
    </source>
</evidence>
<evidence type="ECO:0007744" key="22">
    <source>
    </source>
</evidence>
<evidence type="ECO:0007744" key="23">
    <source>
    </source>
</evidence>
<evidence type="ECO:0007744" key="24">
    <source>
    </source>
</evidence>
<evidence type="ECO:0007744" key="25">
    <source>
    </source>
</evidence>
<evidence type="ECO:0007829" key="26">
    <source>
        <dbReference type="PDB" id="2LD4"/>
    </source>
</evidence>
<evidence type="ECO:0007829" key="27">
    <source>
        <dbReference type="PDB" id="2YUI"/>
    </source>
</evidence>
<evidence type="ECO:0007829" key="28">
    <source>
        <dbReference type="PDB" id="4M7R"/>
    </source>
</evidence>
<name>CPIN1_HUMAN</name>
<feature type="chain" id="PRO_0000079288" description="Anamorsin">
    <location>
        <begin position="1"/>
        <end position="312"/>
    </location>
</feature>
<feature type="region of interest" description="N-terminal SAM-like domain" evidence="3">
    <location>
        <begin position="6"/>
        <end position="172"/>
    </location>
</feature>
<feature type="region of interest" description="Linker" evidence="3">
    <location>
        <begin position="173"/>
        <end position="224"/>
    </location>
</feature>
<feature type="region of interest" description="Fe-S binding site A" evidence="3">
    <location>
        <begin position="237"/>
        <end position="251"/>
    </location>
</feature>
<feature type="region of interest" description="Fe-S binding site B" evidence="3">
    <location>
        <begin position="274"/>
        <end position="288"/>
    </location>
</feature>
<feature type="short sequence motif" description="Cx2C motif 1" evidence="3">
    <location>
        <begin position="274"/>
        <end position="277"/>
    </location>
</feature>
<feature type="short sequence motif" description="Cx2C motif 2" evidence="3">
    <location>
        <begin position="285"/>
        <end position="288"/>
    </location>
</feature>
<feature type="binding site" evidence="3">
    <location>
        <position position="237"/>
    </location>
    <ligand>
        <name>[2Fe-2S] cluster</name>
        <dbReference type="ChEBI" id="CHEBI:190135"/>
    </ligand>
</feature>
<feature type="binding site" evidence="3">
    <location>
        <position position="246"/>
    </location>
    <ligand>
        <name>[2Fe-2S] cluster</name>
        <dbReference type="ChEBI" id="CHEBI:190135"/>
    </ligand>
</feature>
<feature type="binding site" evidence="3">
    <location>
        <position position="249"/>
    </location>
    <ligand>
        <name>[2Fe-2S] cluster</name>
        <dbReference type="ChEBI" id="CHEBI:190135"/>
    </ligand>
</feature>
<feature type="binding site" evidence="3">
    <location>
        <position position="251"/>
    </location>
    <ligand>
        <name>[2Fe-2S] cluster</name>
        <dbReference type="ChEBI" id="CHEBI:190135"/>
    </ligand>
</feature>
<feature type="binding site" evidence="3">
    <location>
        <position position="274"/>
    </location>
    <ligand>
        <name>[4Fe-4S] cluster</name>
        <dbReference type="ChEBI" id="CHEBI:49883"/>
    </ligand>
</feature>
<feature type="binding site" evidence="3">
    <location>
        <position position="277"/>
    </location>
    <ligand>
        <name>[4Fe-4S] cluster</name>
        <dbReference type="ChEBI" id="CHEBI:49883"/>
    </ligand>
</feature>
<feature type="binding site" evidence="3">
    <location>
        <position position="285"/>
    </location>
    <ligand>
        <name>[4Fe-4S] cluster</name>
        <dbReference type="ChEBI" id="CHEBI:49883"/>
    </ligand>
</feature>
<feature type="binding site" evidence="3">
    <location>
        <position position="288"/>
    </location>
    <ligand>
        <name>[4Fe-4S] cluster</name>
        <dbReference type="ChEBI" id="CHEBI:49883"/>
    </ligand>
</feature>
<feature type="modified residue" description="Phosphothreonine" evidence="24">
    <location>
        <position position="136"/>
    </location>
</feature>
<feature type="modified residue" description="Phosphoserine" evidence="24">
    <location>
        <position position="177"/>
    </location>
</feature>
<feature type="modified residue" description="Phosphoserine" evidence="21">
    <location>
        <position position="182"/>
    </location>
</feature>
<feature type="modified residue" description="Phosphoserine" evidence="21 24">
    <location>
        <position position="183"/>
    </location>
</feature>
<feature type="modified residue" description="Phosphoserine" evidence="25">
    <location>
        <position position="215"/>
    </location>
</feature>
<feature type="modified residue" description="Phosphoserine" evidence="2">
    <location>
        <position position="272"/>
    </location>
</feature>
<feature type="modified residue" description="Phosphoserine" evidence="22 23 24">
    <location>
        <position position="305"/>
    </location>
</feature>
<feature type="modified residue" description="Phosphoserine" evidence="20 22 24">
    <location>
        <position position="307"/>
    </location>
</feature>
<feature type="splice variant" id="VSP_012360" description="In isoform 2." evidence="15">
    <location>
        <begin position="1"/>
        <end position="204"/>
    </location>
</feature>
<feature type="splice variant" id="VSP_012361" description="In isoform 3." evidence="14 16 17">
    <original>SAHKESSFDIILSG</original>
    <variation>C</variation>
    <location>
        <begin position="53"/>
        <end position="66"/>
    </location>
</feature>
<feature type="sequence variant" id="VAR_033747" description="In dbSNP:rs11557672.">
    <original>A</original>
    <variation>E</variation>
    <location>
        <position position="34"/>
    </location>
</feature>
<feature type="sequence variant" id="VAR_033748" description="In dbSNP:rs11557674.">
    <original>Q</original>
    <variation>E</variation>
    <location>
        <position position="52"/>
    </location>
</feature>
<feature type="sequence conflict" description="In Ref. 2; CAB66548 and 4; CAG38576." evidence="18" ref="2 4">
    <original>S</original>
    <variation>F</variation>
    <location>
        <position position="142"/>
    </location>
</feature>
<feature type="sequence conflict" description="In Ref. 4; CAG38576." evidence="18" ref="4">
    <original>Y</original>
    <variation>C</variation>
    <location>
        <position position="278"/>
    </location>
</feature>
<feature type="sequence conflict" description="In Ref. 2; CAB66548 and 4; CAG38576." evidence="18" ref="2 4">
    <original>P</original>
    <variation>T</variation>
    <location>
        <position position="289"/>
    </location>
</feature>
<feature type="sequence conflict" description="In Ref. 2; CAB66548 and 4; CAG38576." evidence="18" ref="2 4">
    <original>H</original>
    <variation>N</variation>
    <location>
        <position position="310"/>
    </location>
</feature>
<feature type="helix" evidence="28">
    <location>
        <begin position="2"/>
        <end position="4"/>
    </location>
</feature>
<feature type="strand" evidence="28">
    <location>
        <begin position="11"/>
        <end position="16"/>
    </location>
</feature>
<feature type="helix" evidence="28">
    <location>
        <begin position="22"/>
        <end position="36"/>
    </location>
</feature>
<feature type="turn" evidence="28">
    <location>
        <begin position="37"/>
        <end position="39"/>
    </location>
</feature>
<feature type="strand" evidence="28">
    <location>
        <begin position="40"/>
        <end position="46"/>
    </location>
</feature>
<feature type="helix" evidence="28">
    <location>
        <begin position="47"/>
        <end position="49"/>
    </location>
</feature>
<feature type="helix" evidence="28">
    <location>
        <begin position="50"/>
        <end position="53"/>
    </location>
</feature>
<feature type="strand" evidence="28">
    <location>
        <begin position="60"/>
        <end position="66"/>
    </location>
</feature>
<feature type="strand" evidence="27">
    <location>
        <begin position="68"/>
        <end position="70"/>
    </location>
</feature>
<feature type="helix" evidence="28">
    <location>
        <begin position="77"/>
        <end position="86"/>
    </location>
</feature>
<feature type="strand" evidence="28">
    <location>
        <begin position="87"/>
        <end position="102"/>
    </location>
</feature>
<feature type="strand" evidence="26">
    <location>
        <begin position="105"/>
        <end position="109"/>
    </location>
</feature>
<feature type="helix" evidence="28">
    <location>
        <begin position="112"/>
        <end position="121"/>
    </location>
</feature>
<feature type="strand" evidence="28">
    <location>
        <begin position="125"/>
        <end position="134"/>
    </location>
</feature>
<feature type="helix" evidence="28">
    <location>
        <begin position="137"/>
        <end position="147"/>
    </location>
</feature>
<feature type="strand" evidence="28">
    <location>
        <begin position="154"/>
        <end position="162"/>
    </location>
</feature>
<organism>
    <name type="scientific">Homo sapiens</name>
    <name type="common">Human</name>
    <dbReference type="NCBI Taxonomy" id="9606"/>
    <lineage>
        <taxon>Eukaryota</taxon>
        <taxon>Metazoa</taxon>
        <taxon>Chordata</taxon>
        <taxon>Craniata</taxon>
        <taxon>Vertebrata</taxon>
        <taxon>Euteleostomi</taxon>
        <taxon>Mammalia</taxon>
        <taxon>Eutheria</taxon>
        <taxon>Euarchontoglires</taxon>
        <taxon>Primates</taxon>
        <taxon>Haplorrhini</taxon>
        <taxon>Catarrhini</taxon>
        <taxon>Hominidae</taxon>
        <taxon>Homo</taxon>
    </lineage>
</organism>
<dbReference type="EMBL" id="AF248964">
    <property type="protein sequence ID" value="AAG44562.1"/>
    <property type="molecule type" value="mRNA"/>
</dbReference>
<dbReference type="EMBL" id="AL136613">
    <property type="protein sequence ID" value="CAB66548.1"/>
    <property type="molecule type" value="mRNA"/>
</dbReference>
<dbReference type="EMBL" id="AF116609">
    <property type="protein sequence ID" value="AAF71034.1"/>
    <property type="molecule type" value="mRNA"/>
</dbReference>
<dbReference type="EMBL" id="CR533545">
    <property type="protein sequence ID" value="CAG38576.1"/>
    <property type="molecule type" value="mRNA"/>
</dbReference>
<dbReference type="EMBL" id="AK292281">
    <property type="protein sequence ID" value="BAF84970.1"/>
    <property type="molecule type" value="mRNA"/>
</dbReference>
<dbReference type="EMBL" id="AC004382">
    <property type="protein sequence ID" value="AAC24311.1"/>
    <property type="molecule type" value="Genomic_DNA"/>
</dbReference>
<dbReference type="EMBL" id="AC004382">
    <property type="protein sequence ID" value="AAC24312.1"/>
    <property type="status" value="ALT_SEQ"/>
    <property type="molecule type" value="Genomic_DNA"/>
</dbReference>
<dbReference type="EMBL" id="CH471092">
    <property type="protein sequence ID" value="EAW82923.1"/>
    <property type="molecule type" value="Genomic_DNA"/>
</dbReference>
<dbReference type="EMBL" id="BC002568">
    <property type="protein sequence ID" value="AAH02568.1"/>
    <property type="molecule type" value="mRNA"/>
</dbReference>
<dbReference type="EMBL" id="BC024196">
    <property type="protein sequence ID" value="AAH24196.1"/>
    <property type="molecule type" value="mRNA"/>
</dbReference>
<dbReference type="EMBL" id="BC067303">
    <property type="protein sequence ID" value="AAH67303.1"/>
    <property type="molecule type" value="mRNA"/>
</dbReference>
<dbReference type="EMBL" id="BC071740">
    <property type="protein sequence ID" value="AAH71740.1"/>
    <property type="molecule type" value="mRNA"/>
</dbReference>
<dbReference type="CCDS" id="CCDS10781.2">
    <molecule id="Q6FI81-1"/>
</dbReference>
<dbReference type="CCDS" id="CCDS76876.1">
    <molecule id="Q6FI81-3"/>
</dbReference>
<dbReference type="RefSeq" id="NP_001295276.1">
    <molecule id="Q6FI81-3"/>
    <property type="nucleotide sequence ID" value="NM_001308347.2"/>
</dbReference>
<dbReference type="RefSeq" id="NP_001295287.1">
    <property type="nucleotide sequence ID" value="NM_001308358.1"/>
</dbReference>
<dbReference type="RefSeq" id="NP_064709.2">
    <molecule id="Q6FI81-1"/>
    <property type="nucleotide sequence ID" value="NM_020313.4"/>
</dbReference>
<dbReference type="PDB" id="2LD4">
    <property type="method" value="NMR"/>
    <property type="chains" value="A=1-172"/>
</dbReference>
<dbReference type="PDB" id="2YUI">
    <property type="method" value="NMR"/>
    <property type="chains" value="A=1-170"/>
</dbReference>
<dbReference type="PDB" id="4M7R">
    <property type="method" value="X-ray"/>
    <property type="resolution" value="1.80 A"/>
    <property type="chains" value="A/B=1-172"/>
</dbReference>
<dbReference type="PDBsum" id="2LD4"/>
<dbReference type="PDBsum" id="2YUI"/>
<dbReference type="PDBsum" id="4M7R"/>
<dbReference type="BMRB" id="Q6FI81"/>
<dbReference type="SMR" id="Q6FI81"/>
<dbReference type="BioGRID" id="121328">
    <property type="interactions" value="100"/>
</dbReference>
<dbReference type="DIP" id="DIP-61697N"/>
<dbReference type="FunCoup" id="Q6FI81">
    <property type="interactions" value="4153"/>
</dbReference>
<dbReference type="IntAct" id="Q6FI81">
    <property type="interactions" value="41"/>
</dbReference>
<dbReference type="MINT" id="Q6FI81"/>
<dbReference type="STRING" id="9606.ENSP00000377914"/>
<dbReference type="ChEMBL" id="CHEMBL4523341"/>
<dbReference type="GlyGen" id="Q6FI81">
    <property type="glycosylation" value="1 site, 1 O-linked glycan (1 site)"/>
</dbReference>
<dbReference type="iPTMnet" id="Q6FI81"/>
<dbReference type="PhosphoSitePlus" id="Q6FI81"/>
<dbReference type="BioMuta" id="CIAPIN1"/>
<dbReference type="DMDM" id="57012667"/>
<dbReference type="jPOST" id="Q6FI81"/>
<dbReference type="MassIVE" id="Q6FI81"/>
<dbReference type="PaxDb" id="9606-ENSP00000377914"/>
<dbReference type="PeptideAtlas" id="Q6FI81"/>
<dbReference type="ProteomicsDB" id="66295">
    <molecule id="Q6FI81-1"/>
</dbReference>
<dbReference type="ProteomicsDB" id="66296">
    <molecule id="Q6FI81-2"/>
</dbReference>
<dbReference type="ProteomicsDB" id="66297">
    <molecule id="Q6FI81-3"/>
</dbReference>
<dbReference type="Pumba" id="Q6FI81"/>
<dbReference type="TopDownProteomics" id="Q6FI81-1">
    <molecule id="Q6FI81-1"/>
</dbReference>
<dbReference type="Antibodypedia" id="28857">
    <property type="antibodies" value="420 antibodies from 32 providers"/>
</dbReference>
<dbReference type="DNASU" id="57019"/>
<dbReference type="Ensembl" id="ENST00000394391.9">
    <molecule id="Q6FI81-1"/>
    <property type="protein sequence ID" value="ENSP00000377914.4"/>
    <property type="gene ID" value="ENSG00000005194.15"/>
</dbReference>
<dbReference type="Ensembl" id="ENST00000567518.5">
    <molecule id="Q6FI81-3"/>
    <property type="protein sequence ID" value="ENSP00000456114.1"/>
    <property type="gene ID" value="ENSG00000005194.15"/>
</dbReference>
<dbReference type="GeneID" id="57019"/>
<dbReference type="KEGG" id="hsa:57019"/>
<dbReference type="MANE-Select" id="ENST00000394391.9">
    <property type="protein sequence ID" value="ENSP00000377914.4"/>
    <property type="RefSeq nucleotide sequence ID" value="NM_020313.4"/>
    <property type="RefSeq protein sequence ID" value="NP_064709.2"/>
</dbReference>
<dbReference type="UCSC" id="uc002ell.2">
    <molecule id="Q6FI81-1"/>
    <property type="organism name" value="human"/>
</dbReference>
<dbReference type="AGR" id="HGNC:28050"/>
<dbReference type="CTD" id="57019"/>
<dbReference type="DisGeNET" id="57019"/>
<dbReference type="GeneCards" id="CIAPIN1"/>
<dbReference type="HGNC" id="HGNC:28050">
    <property type="gene designation" value="CIAPIN1"/>
</dbReference>
<dbReference type="HPA" id="ENSG00000005194">
    <property type="expression patterns" value="Low tissue specificity"/>
</dbReference>
<dbReference type="MIM" id="608943">
    <property type="type" value="gene"/>
</dbReference>
<dbReference type="neXtProt" id="NX_Q6FI81"/>
<dbReference type="OpenTargets" id="ENSG00000005194"/>
<dbReference type="PharmGKB" id="PA134978864"/>
<dbReference type="VEuPathDB" id="HostDB:ENSG00000005194"/>
<dbReference type="eggNOG" id="KOG4020">
    <property type="taxonomic scope" value="Eukaryota"/>
</dbReference>
<dbReference type="GeneTree" id="ENSGT00390000011417"/>
<dbReference type="HOGENOM" id="CLU_064393_2_0_1"/>
<dbReference type="InParanoid" id="Q6FI81"/>
<dbReference type="OMA" id="GFINCRE"/>
<dbReference type="OrthoDB" id="311633at2759"/>
<dbReference type="PAN-GO" id="Q6FI81">
    <property type="GO annotations" value="2 GO annotations based on evolutionary models"/>
</dbReference>
<dbReference type="PhylomeDB" id="Q6FI81"/>
<dbReference type="TreeFam" id="TF314449"/>
<dbReference type="PathwayCommons" id="Q6FI81"/>
<dbReference type="Reactome" id="R-HSA-2564830">
    <property type="pathway name" value="Cytosolic iron-sulfur cluster assembly"/>
</dbReference>
<dbReference type="SignaLink" id="Q6FI81"/>
<dbReference type="BioGRID-ORCS" id="57019">
    <property type="hits" value="629 hits in 1176 CRISPR screens"/>
</dbReference>
<dbReference type="ChiTaRS" id="CIAPIN1">
    <property type="organism name" value="human"/>
</dbReference>
<dbReference type="EvolutionaryTrace" id="Q6FI81"/>
<dbReference type="GeneWiki" id="CIAPIN1"/>
<dbReference type="GenomeRNAi" id="57019"/>
<dbReference type="Pharos" id="Q6FI81">
    <property type="development level" value="Tbio"/>
</dbReference>
<dbReference type="PRO" id="PR:Q6FI81"/>
<dbReference type="Proteomes" id="UP000005640">
    <property type="component" value="Chromosome 16"/>
</dbReference>
<dbReference type="RNAct" id="Q6FI81">
    <property type="molecule type" value="protein"/>
</dbReference>
<dbReference type="Bgee" id="ENSG00000005194">
    <property type="expression patterns" value="Expressed in oocyte and 205 other cell types or tissues"/>
</dbReference>
<dbReference type="ExpressionAtlas" id="Q6FI81">
    <property type="expression patterns" value="baseline and differential"/>
</dbReference>
<dbReference type="GO" id="GO:0005737">
    <property type="term" value="C:cytoplasm"/>
    <property type="evidence" value="ECO:0000314"/>
    <property type="project" value="UniProtKB"/>
</dbReference>
<dbReference type="GO" id="GO:0005758">
    <property type="term" value="C:mitochondrial intermembrane space"/>
    <property type="evidence" value="ECO:0007669"/>
    <property type="project" value="UniProtKB-SubCell"/>
</dbReference>
<dbReference type="GO" id="GO:0005739">
    <property type="term" value="C:mitochondrion"/>
    <property type="evidence" value="ECO:0000314"/>
    <property type="project" value="HPA"/>
</dbReference>
<dbReference type="GO" id="GO:0005730">
    <property type="term" value="C:nucleolus"/>
    <property type="evidence" value="ECO:0000314"/>
    <property type="project" value="UniProtKB"/>
</dbReference>
<dbReference type="GO" id="GO:0005654">
    <property type="term" value="C:nucleoplasm"/>
    <property type="evidence" value="ECO:0000314"/>
    <property type="project" value="HPA"/>
</dbReference>
<dbReference type="GO" id="GO:0051537">
    <property type="term" value="F:2 iron, 2 sulfur cluster binding"/>
    <property type="evidence" value="ECO:0000314"/>
    <property type="project" value="UniProtKB"/>
</dbReference>
<dbReference type="GO" id="GO:0051539">
    <property type="term" value="F:4 iron, 4 sulfur cluster binding"/>
    <property type="evidence" value="ECO:0007669"/>
    <property type="project" value="UniProtKB-KW"/>
</dbReference>
<dbReference type="GO" id="GO:0009055">
    <property type="term" value="F:electron transfer activity"/>
    <property type="evidence" value="ECO:0007669"/>
    <property type="project" value="UniProtKB-UniRule"/>
</dbReference>
<dbReference type="GO" id="GO:0005506">
    <property type="term" value="F:iron ion binding"/>
    <property type="evidence" value="ECO:0000269"/>
    <property type="project" value="DisProt"/>
</dbReference>
<dbReference type="GO" id="GO:0006915">
    <property type="term" value="P:apoptotic process"/>
    <property type="evidence" value="ECO:0007669"/>
    <property type="project" value="UniProtKB-KW"/>
</dbReference>
<dbReference type="GO" id="GO:0030097">
    <property type="term" value="P:hemopoiesis"/>
    <property type="evidence" value="ECO:0007669"/>
    <property type="project" value="UniProtKB-UniRule"/>
</dbReference>
<dbReference type="GO" id="GO:0016226">
    <property type="term" value="P:iron-sulfur cluster assembly"/>
    <property type="evidence" value="ECO:0000318"/>
    <property type="project" value="GO_Central"/>
</dbReference>
<dbReference type="GO" id="GO:0043066">
    <property type="term" value="P:negative regulation of apoptotic process"/>
    <property type="evidence" value="ECO:0000250"/>
    <property type="project" value="UniProtKB"/>
</dbReference>
<dbReference type="CDD" id="cd02440">
    <property type="entry name" value="AdoMet_MTases"/>
    <property type="match status" value="1"/>
</dbReference>
<dbReference type="DisProt" id="DP01137"/>
<dbReference type="FunFam" id="3.40.50.150:FF:000658">
    <property type="entry name" value="Anamorsin"/>
    <property type="match status" value="1"/>
</dbReference>
<dbReference type="Gene3D" id="3.40.50.150">
    <property type="entry name" value="Vaccinia Virus protein VP39"/>
    <property type="match status" value="1"/>
</dbReference>
<dbReference type="HAMAP" id="MF_03115">
    <property type="entry name" value="Anamorsin"/>
    <property type="match status" value="1"/>
</dbReference>
<dbReference type="InterPro" id="IPR007785">
    <property type="entry name" value="Anamorsin"/>
</dbReference>
<dbReference type="InterPro" id="IPR049011">
    <property type="entry name" value="Anamorsin_N_metazoan"/>
</dbReference>
<dbReference type="InterPro" id="IPR046408">
    <property type="entry name" value="CIAPIN1"/>
</dbReference>
<dbReference type="InterPro" id="IPR029063">
    <property type="entry name" value="SAM-dependent_MTases_sf"/>
</dbReference>
<dbReference type="PANTHER" id="PTHR13273">
    <property type="entry name" value="ANAMORSIN"/>
    <property type="match status" value="1"/>
</dbReference>
<dbReference type="PANTHER" id="PTHR13273:SF17">
    <property type="entry name" value="ANAMORSIN"/>
    <property type="match status" value="1"/>
</dbReference>
<dbReference type="Pfam" id="PF20922">
    <property type="entry name" value="Anamorsin_N"/>
    <property type="match status" value="1"/>
</dbReference>
<dbReference type="Pfam" id="PF05093">
    <property type="entry name" value="CIAPIN1"/>
    <property type="match status" value="2"/>
</dbReference>
<dbReference type="SUPFAM" id="SSF53335">
    <property type="entry name" value="S-adenosyl-L-methionine-dependent methyltransferases"/>
    <property type="match status" value="1"/>
</dbReference>
<reference key="1">
    <citation type="submission" date="2000-03" db="EMBL/GenBank/DDBJ databases">
        <authorList>
            <person name="Yang Y."/>
            <person name="Xu X."/>
            <person name="Gao G."/>
            <person name="Xiao H."/>
            <person name="Chen Z."/>
            <person name="Han Z."/>
        </authorList>
    </citation>
    <scope>NUCLEOTIDE SEQUENCE [LARGE SCALE MRNA] (ISOFORM 1)</scope>
    <source>
        <tissue>Adrenal tumor</tissue>
    </source>
</reference>
<reference key="2">
    <citation type="journal article" date="2001" name="Genome Res.">
        <title>Towards a catalog of human genes and proteins: sequencing and analysis of 500 novel complete protein coding human cDNAs.</title>
        <authorList>
            <person name="Wiemann S."/>
            <person name="Weil B."/>
            <person name="Wellenreuther R."/>
            <person name="Gassenhuber J."/>
            <person name="Glassl S."/>
            <person name="Ansorge W."/>
            <person name="Boecher M."/>
            <person name="Bloecker H."/>
            <person name="Bauersachs S."/>
            <person name="Blum H."/>
            <person name="Lauber J."/>
            <person name="Duesterhoeft A."/>
            <person name="Beyer A."/>
            <person name="Koehrer K."/>
            <person name="Strack N."/>
            <person name="Mewes H.-W."/>
            <person name="Ottenwaelder B."/>
            <person name="Obermaier B."/>
            <person name="Tampe J."/>
            <person name="Heubner D."/>
            <person name="Wambutt R."/>
            <person name="Korn B."/>
            <person name="Klein M."/>
            <person name="Poustka A."/>
        </authorList>
    </citation>
    <scope>NUCLEOTIDE SEQUENCE [LARGE SCALE MRNA] (ISOFORM 3)</scope>
    <source>
        <tissue>Brain</tissue>
    </source>
</reference>
<reference key="3">
    <citation type="journal article" date="2001" name="Genome Res.">
        <title>Gene expression profiling in human fetal liver and identification of tissue- and developmental-stage-specific genes through compiled expression profiles and efficient cloning of full-length cDNAs.</title>
        <authorList>
            <person name="Yu Y."/>
            <person name="Zhang C."/>
            <person name="Zhou G."/>
            <person name="Wu S."/>
            <person name="Qu X."/>
            <person name="Wei H."/>
            <person name="Xing G."/>
            <person name="Dong C."/>
            <person name="Zhai Y."/>
            <person name="Wan J."/>
            <person name="Ouyang S."/>
            <person name="Li L."/>
            <person name="Zhang S."/>
            <person name="Zhou K."/>
            <person name="Zhang Y."/>
            <person name="Wu C."/>
            <person name="He F."/>
        </authorList>
    </citation>
    <scope>NUCLEOTIDE SEQUENCE [LARGE SCALE MRNA] (ISOFORM 2)</scope>
    <source>
        <tissue>Fetal liver</tissue>
    </source>
</reference>
<reference key="4">
    <citation type="submission" date="2004-06" db="EMBL/GenBank/DDBJ databases">
        <title>Cloning of human full open reading frames in Gateway(TM) system entry vector (pDONR201).</title>
        <authorList>
            <person name="Ebert L."/>
            <person name="Schick M."/>
            <person name="Neubert P."/>
            <person name="Schatten R."/>
            <person name="Henze S."/>
            <person name="Korn B."/>
        </authorList>
    </citation>
    <scope>NUCLEOTIDE SEQUENCE [LARGE SCALE MRNA] (ISOFORM 3)</scope>
</reference>
<reference key="5">
    <citation type="journal article" date="2004" name="Nat. Genet.">
        <title>Complete sequencing and characterization of 21,243 full-length human cDNAs.</title>
        <authorList>
            <person name="Ota T."/>
            <person name="Suzuki Y."/>
            <person name="Nishikawa T."/>
            <person name="Otsuki T."/>
            <person name="Sugiyama T."/>
            <person name="Irie R."/>
            <person name="Wakamatsu A."/>
            <person name="Hayashi K."/>
            <person name="Sato H."/>
            <person name="Nagai K."/>
            <person name="Kimura K."/>
            <person name="Makita H."/>
            <person name="Sekine M."/>
            <person name="Obayashi M."/>
            <person name="Nishi T."/>
            <person name="Shibahara T."/>
            <person name="Tanaka T."/>
            <person name="Ishii S."/>
            <person name="Yamamoto J."/>
            <person name="Saito K."/>
            <person name="Kawai Y."/>
            <person name="Isono Y."/>
            <person name="Nakamura Y."/>
            <person name="Nagahari K."/>
            <person name="Murakami K."/>
            <person name="Yasuda T."/>
            <person name="Iwayanagi T."/>
            <person name="Wagatsuma M."/>
            <person name="Shiratori A."/>
            <person name="Sudo H."/>
            <person name="Hosoiri T."/>
            <person name="Kaku Y."/>
            <person name="Kodaira H."/>
            <person name="Kondo H."/>
            <person name="Sugawara M."/>
            <person name="Takahashi M."/>
            <person name="Kanda K."/>
            <person name="Yokoi T."/>
            <person name="Furuya T."/>
            <person name="Kikkawa E."/>
            <person name="Omura Y."/>
            <person name="Abe K."/>
            <person name="Kamihara K."/>
            <person name="Katsuta N."/>
            <person name="Sato K."/>
            <person name="Tanikawa M."/>
            <person name="Yamazaki M."/>
            <person name="Ninomiya K."/>
            <person name="Ishibashi T."/>
            <person name="Yamashita H."/>
            <person name="Murakawa K."/>
            <person name="Fujimori K."/>
            <person name="Tanai H."/>
            <person name="Kimata M."/>
            <person name="Watanabe M."/>
            <person name="Hiraoka S."/>
            <person name="Chiba Y."/>
            <person name="Ishida S."/>
            <person name="Ono Y."/>
            <person name="Takiguchi S."/>
            <person name="Watanabe S."/>
            <person name="Yosida M."/>
            <person name="Hotuta T."/>
            <person name="Kusano J."/>
            <person name="Kanehori K."/>
            <person name="Takahashi-Fujii A."/>
            <person name="Hara H."/>
            <person name="Tanase T.-O."/>
            <person name="Nomura Y."/>
            <person name="Togiya S."/>
            <person name="Komai F."/>
            <person name="Hara R."/>
            <person name="Takeuchi K."/>
            <person name="Arita M."/>
            <person name="Imose N."/>
            <person name="Musashino K."/>
            <person name="Yuuki H."/>
            <person name="Oshima A."/>
            <person name="Sasaki N."/>
            <person name="Aotsuka S."/>
            <person name="Yoshikawa Y."/>
            <person name="Matsunawa H."/>
            <person name="Ichihara T."/>
            <person name="Shiohata N."/>
            <person name="Sano S."/>
            <person name="Moriya S."/>
            <person name="Momiyama H."/>
            <person name="Satoh N."/>
            <person name="Takami S."/>
            <person name="Terashima Y."/>
            <person name="Suzuki O."/>
            <person name="Nakagawa S."/>
            <person name="Senoh A."/>
            <person name="Mizoguchi H."/>
            <person name="Goto Y."/>
            <person name="Shimizu F."/>
            <person name="Wakebe H."/>
            <person name="Hishigaki H."/>
            <person name="Watanabe T."/>
            <person name="Sugiyama A."/>
            <person name="Takemoto M."/>
            <person name="Kawakami B."/>
            <person name="Yamazaki M."/>
            <person name="Watanabe K."/>
            <person name="Kumagai A."/>
            <person name="Itakura S."/>
            <person name="Fukuzumi Y."/>
            <person name="Fujimori Y."/>
            <person name="Komiyama M."/>
            <person name="Tashiro H."/>
            <person name="Tanigami A."/>
            <person name="Fujiwara T."/>
            <person name="Ono T."/>
            <person name="Yamada K."/>
            <person name="Fujii Y."/>
            <person name="Ozaki K."/>
            <person name="Hirao M."/>
            <person name="Ohmori Y."/>
            <person name="Kawabata A."/>
            <person name="Hikiji T."/>
            <person name="Kobatake N."/>
            <person name="Inagaki H."/>
            <person name="Ikema Y."/>
            <person name="Okamoto S."/>
            <person name="Okitani R."/>
            <person name="Kawakami T."/>
            <person name="Noguchi S."/>
            <person name="Itoh T."/>
            <person name="Shigeta K."/>
            <person name="Senba T."/>
            <person name="Matsumura K."/>
            <person name="Nakajima Y."/>
            <person name="Mizuno T."/>
            <person name="Morinaga M."/>
            <person name="Sasaki M."/>
            <person name="Togashi T."/>
            <person name="Oyama M."/>
            <person name="Hata H."/>
            <person name="Watanabe M."/>
            <person name="Komatsu T."/>
            <person name="Mizushima-Sugano J."/>
            <person name="Satoh T."/>
            <person name="Shirai Y."/>
            <person name="Takahashi Y."/>
            <person name="Nakagawa K."/>
            <person name="Okumura K."/>
            <person name="Nagase T."/>
            <person name="Nomura N."/>
            <person name="Kikuchi H."/>
            <person name="Masuho Y."/>
            <person name="Yamashita R."/>
            <person name="Nakai K."/>
            <person name="Yada T."/>
            <person name="Nakamura Y."/>
            <person name="Ohara O."/>
            <person name="Isogai T."/>
            <person name="Sugano S."/>
        </authorList>
    </citation>
    <scope>NUCLEOTIDE SEQUENCE [LARGE SCALE MRNA] (ISOFORM 3)</scope>
    <source>
        <tissue>Testis</tissue>
    </source>
</reference>
<reference key="6">
    <citation type="journal article" date="1999" name="Genomics">
        <title>Genome duplications and other features in 12 Mb of DNA sequence from human chromosome 16p and 16q.</title>
        <authorList>
            <person name="Loftus B.J."/>
            <person name="Kim U.-J."/>
            <person name="Sneddon V.P."/>
            <person name="Kalush F."/>
            <person name="Brandon R."/>
            <person name="Fuhrmann J."/>
            <person name="Mason T."/>
            <person name="Crosby M.L."/>
            <person name="Barnstead M."/>
            <person name="Cronin L."/>
            <person name="Mays A.D."/>
            <person name="Cao Y."/>
            <person name="Xu R.X."/>
            <person name="Kang H.-L."/>
            <person name="Mitchell S."/>
            <person name="Eichler E.E."/>
            <person name="Harris P.C."/>
            <person name="Venter J.C."/>
            <person name="Adams M.D."/>
        </authorList>
    </citation>
    <scope>NUCLEOTIDE SEQUENCE [LARGE SCALE GENOMIC DNA]</scope>
</reference>
<reference key="7">
    <citation type="submission" date="2005-07" db="EMBL/GenBank/DDBJ databases">
        <authorList>
            <person name="Mural R.J."/>
            <person name="Istrail S."/>
            <person name="Sutton G.G."/>
            <person name="Florea L."/>
            <person name="Halpern A.L."/>
            <person name="Mobarry C.M."/>
            <person name="Lippert R."/>
            <person name="Walenz B."/>
            <person name="Shatkay H."/>
            <person name="Dew I."/>
            <person name="Miller J.R."/>
            <person name="Flanigan M.J."/>
            <person name="Edwards N.J."/>
            <person name="Bolanos R."/>
            <person name="Fasulo D."/>
            <person name="Halldorsson B.V."/>
            <person name="Hannenhalli S."/>
            <person name="Turner R."/>
            <person name="Yooseph S."/>
            <person name="Lu F."/>
            <person name="Nusskern D.R."/>
            <person name="Shue B.C."/>
            <person name="Zheng X.H."/>
            <person name="Zhong F."/>
            <person name="Delcher A.L."/>
            <person name="Huson D.H."/>
            <person name="Kravitz S.A."/>
            <person name="Mouchard L."/>
            <person name="Reinert K."/>
            <person name="Remington K.A."/>
            <person name="Clark A.G."/>
            <person name="Waterman M.S."/>
            <person name="Eichler E.E."/>
            <person name="Adams M.D."/>
            <person name="Hunkapiller M.W."/>
            <person name="Myers E.W."/>
            <person name="Venter J.C."/>
        </authorList>
    </citation>
    <scope>NUCLEOTIDE SEQUENCE [LARGE SCALE GENOMIC DNA]</scope>
</reference>
<reference key="8">
    <citation type="journal article" date="2004" name="Genome Res.">
        <title>The status, quality, and expansion of the NIH full-length cDNA project: the Mammalian Gene Collection (MGC).</title>
        <authorList>
            <consortium name="The MGC Project Team"/>
        </authorList>
    </citation>
    <scope>NUCLEOTIDE SEQUENCE [LARGE SCALE MRNA] (ISOFORM 1)</scope>
    <source>
        <tissue>Brain</tissue>
        <tissue>Placenta</tissue>
        <tissue>Skin</tissue>
        <tissue>Testis</tissue>
    </source>
</reference>
<reference key="9">
    <citation type="journal article" date="2004" name="J. Exp. Med.">
        <title>Identification of a cytokine-induced antiapoptotic molecule anamorsin essential for definitive hematopoiesis.</title>
        <authorList>
            <person name="Shibayama H."/>
            <person name="Takai E."/>
            <person name="Matsumura I."/>
            <person name="Kouno M."/>
            <person name="Morii E."/>
            <person name="Kitamura Y."/>
            <person name="Takeda J."/>
            <person name="Kanakura Y."/>
        </authorList>
    </citation>
    <scope>TISSUE SPECIFICITY</scope>
</reference>
<reference key="10">
    <citation type="journal article" date="2006" name="J. Histochem. Cytochem.">
        <title>Subcellular localization of CIAPIN1.</title>
        <authorList>
            <person name="Hao Z."/>
            <person name="Li X."/>
            <person name="Qiao T."/>
            <person name="Du R."/>
            <person name="Zhang G."/>
            <person name="Fan D."/>
        </authorList>
    </citation>
    <scope>SUBCELLULAR LOCATION</scope>
</reference>
<reference key="11">
    <citation type="journal article" date="2008" name="Int. J. Biol. Macromol.">
        <title>Successful expression and purification of human CIAPIN1 in baculovirus-insect cell system and application of this system to investigation of its potential methyltransferase activity.</title>
        <authorList>
            <person name="Hao Z."/>
            <person name="Li X."/>
            <person name="Qiao T."/>
            <person name="Fan D."/>
        </authorList>
    </citation>
    <scope>LACK OF METHYLTRANSFERASE ACTIVITY</scope>
</reference>
<reference key="12">
    <citation type="journal article" date="2008" name="Proc. Natl. Acad. Sci. U.S.A.">
        <title>A quantitative atlas of mitotic phosphorylation.</title>
        <authorList>
            <person name="Dephoure N."/>
            <person name="Zhou C."/>
            <person name="Villen J."/>
            <person name="Beausoleil S.A."/>
            <person name="Bakalarski C.E."/>
            <person name="Elledge S.J."/>
            <person name="Gygi S.P."/>
        </authorList>
    </citation>
    <scope>PHOSPHORYLATION [LARGE SCALE ANALYSIS] AT SER-307</scope>
    <scope>IDENTIFICATION BY MASS SPECTROMETRY [LARGE SCALE ANALYSIS]</scope>
    <source>
        <tissue>Cervix carcinoma</tissue>
    </source>
</reference>
<reference key="13">
    <citation type="journal article" date="2009" name="Sci. Signal.">
        <title>Quantitative phosphoproteomic analysis of T cell receptor signaling reveals system-wide modulation of protein-protein interactions.</title>
        <authorList>
            <person name="Mayya V."/>
            <person name="Lundgren D.H."/>
            <person name="Hwang S.-I."/>
            <person name="Rezaul K."/>
            <person name="Wu L."/>
            <person name="Eng J.K."/>
            <person name="Rodionov V."/>
            <person name="Han D.K."/>
        </authorList>
    </citation>
    <scope>PHOSPHORYLATION [LARGE SCALE ANALYSIS] AT SER-182 AND SER-183</scope>
    <scope>IDENTIFICATION BY MASS SPECTROMETRY [LARGE SCALE ANALYSIS]</scope>
    <source>
        <tissue>Leukemic T-cell</tissue>
    </source>
</reference>
<reference key="14">
    <citation type="journal article" date="2010" name="Sci. Signal.">
        <title>Quantitative phosphoproteomics reveals widespread full phosphorylation site occupancy during mitosis.</title>
        <authorList>
            <person name="Olsen J.V."/>
            <person name="Vermeulen M."/>
            <person name="Santamaria A."/>
            <person name="Kumar C."/>
            <person name="Miller M.L."/>
            <person name="Jensen L.J."/>
            <person name="Gnad F."/>
            <person name="Cox J."/>
            <person name="Jensen T.S."/>
            <person name="Nigg E.A."/>
            <person name="Brunak S."/>
            <person name="Mann M."/>
        </authorList>
    </citation>
    <scope>PHOSPHORYLATION [LARGE SCALE ANALYSIS] AT SER-305 AND SER-307</scope>
    <scope>IDENTIFICATION BY MASS SPECTROMETRY [LARGE SCALE ANALYSIS]</scope>
    <source>
        <tissue>Cervix carcinoma</tissue>
    </source>
</reference>
<reference key="15">
    <citation type="journal article" date="2011" name="BMC Syst. Biol.">
        <title>Initial characterization of the human central proteome.</title>
        <authorList>
            <person name="Burkard T.R."/>
            <person name="Planyavsky M."/>
            <person name="Kaupe I."/>
            <person name="Breitwieser F.P."/>
            <person name="Buerckstuemmer T."/>
            <person name="Bennett K.L."/>
            <person name="Superti-Furga G."/>
            <person name="Colinge J."/>
        </authorList>
    </citation>
    <scope>IDENTIFICATION BY MASS SPECTROMETRY [LARGE SCALE ANALYSIS]</scope>
</reference>
<reference key="16">
    <citation type="journal article" date="2011" name="Sci. Signal.">
        <title>System-wide temporal characterization of the proteome and phosphoproteome of human embryonic stem cell differentiation.</title>
        <authorList>
            <person name="Rigbolt K.T."/>
            <person name="Prokhorova T.A."/>
            <person name="Akimov V."/>
            <person name="Henningsen J."/>
            <person name="Johansen P.T."/>
            <person name="Kratchmarova I."/>
            <person name="Kassem M."/>
            <person name="Mann M."/>
            <person name="Olsen J.V."/>
            <person name="Blagoev B."/>
        </authorList>
    </citation>
    <scope>PHOSPHORYLATION [LARGE SCALE ANALYSIS] AT SER-305</scope>
    <scope>IDENTIFICATION BY MASS SPECTROMETRY [LARGE SCALE ANALYSIS]</scope>
</reference>
<reference key="17">
    <citation type="journal article" date="2013" name="J. Biol. Inorg. Chem.">
        <title>Human anamorsin binds [2Fe-2S] clusters with unique electronic properties.</title>
        <authorList>
            <person name="Banci L."/>
            <person name="Ciofi-Baffoni S."/>
            <person name="Mikolajczyk M."/>
            <person name="Winkelmann J."/>
            <person name="Bill E."/>
            <person name="Pandelia M.E."/>
        </authorList>
    </citation>
    <scope>COFACTOR</scope>
</reference>
<reference key="18">
    <citation type="journal article" date="2013" name="J. Proteome Res.">
        <title>Toward a comprehensive characterization of a human cancer cell phosphoproteome.</title>
        <authorList>
            <person name="Zhou H."/>
            <person name="Di Palma S."/>
            <person name="Preisinger C."/>
            <person name="Peng M."/>
            <person name="Polat A.N."/>
            <person name="Heck A.J."/>
            <person name="Mohammed S."/>
        </authorList>
    </citation>
    <scope>PHOSPHORYLATION [LARGE SCALE ANALYSIS] AT THR-136; SER-177; SER-183; SER-305 AND SER-307</scope>
    <scope>IDENTIFICATION BY MASS SPECTROMETRY [LARGE SCALE ANALYSIS]</scope>
    <source>
        <tissue>Cervix carcinoma</tissue>
        <tissue>Erythroleukemia</tissue>
    </source>
</reference>
<reference key="19">
    <citation type="journal article" date="2013" name="Proc. Natl. Acad. Sci. U.S.A.">
        <title>Molecular view of an electron transfer process essential for iron-sulfur protein biogenesis.</title>
        <authorList>
            <person name="Banci L."/>
            <person name="Bertini I."/>
            <person name="Calderone V."/>
            <person name="Ciofi-Baffoni S."/>
            <person name="Giachetti A."/>
            <person name="Jaiswal D."/>
            <person name="Mikolajczyk M."/>
            <person name="Piccioli M."/>
            <person name="Winkelmann J."/>
        </authorList>
    </citation>
    <scope>INTERACTION WITH NDOR1</scope>
    <scope>DOMAIN</scope>
    <scope>FUNCTION</scope>
    <scope>COFACTOR</scope>
</reference>
<reference key="20">
    <citation type="journal article" date="2014" name="J. Proteomics">
        <title>An enzyme assisted RP-RPLC approach for in-depth analysis of human liver phosphoproteome.</title>
        <authorList>
            <person name="Bian Y."/>
            <person name="Song C."/>
            <person name="Cheng K."/>
            <person name="Dong M."/>
            <person name="Wang F."/>
            <person name="Huang J."/>
            <person name="Sun D."/>
            <person name="Wang L."/>
            <person name="Ye M."/>
            <person name="Zou H."/>
        </authorList>
    </citation>
    <scope>PHOSPHORYLATION [LARGE SCALE ANALYSIS] AT SER-215</scope>
    <scope>IDENTIFICATION BY MASS SPECTROMETRY [LARGE SCALE ANALYSIS]</scope>
    <source>
        <tissue>Liver</tissue>
    </source>
</reference>
<reference key="21">
    <citation type="journal article" date="2015" name="J. Am. Chem. Soc.">
        <title>Elucidating the molecular function of human BOLA2 in GRX3-dependent anamorsin maturation pathway.</title>
        <authorList>
            <person name="Banci L."/>
            <person name="Camponeschi F."/>
            <person name="Ciofi-Baffoni S."/>
            <person name="Muzzioli R."/>
        </authorList>
    </citation>
    <scope>COFACTOR</scope>
</reference>
<reference key="22">
    <citation type="journal article" date="2016" name="J. Biol. Chem.">
        <title>A glutaredoxin-BolA complex serves as an iron-sulfur cluster chaperone for the cytosolic cluster assembly machinery.</title>
        <authorList>
            <person name="Frey A.G."/>
            <person name="Palenchar D.J."/>
            <person name="Wildemann J.D."/>
            <person name="Philpott C.C."/>
        </authorList>
    </citation>
    <scope>COFACTOR</scope>
</reference>
<reference key="23">
    <citation type="journal article" date="2017" name="J. Biochem.">
        <title>EPR studies of wild type and mutant Dre2 identify essential [2Fe--2S] and [4Fe--4S] clusters and their cysteine ligands.</title>
        <authorList>
            <person name="Zhang Y."/>
            <person name="Yang C."/>
            <person name="Dancis A."/>
            <person name="Nakamaru-Ogiso E."/>
        </authorList>
    </citation>
    <scope>COFACTOR</scope>
</reference>
<reference key="24">
    <citation type="submission" date="2008-04" db="PDB data bank">
        <title>Solution structure of the N-terminal domain in human cytokine-induced apoptosis inhibitor anamorsin.</title>
        <authorList>
            <consortium name="RIKEN structural genomics initiative (RSGI)"/>
        </authorList>
    </citation>
    <scope>STRUCTURE BY NMR OF 1-171</scope>
</reference>
<reference key="25">
    <citation type="journal article" date="2011" name="Chem. Biol.">
        <title>Anamorsin is a [2Fe-2S] cluster-containing substrate of the Mia40-dependent mitochondrial protein trapping machinery.</title>
        <authorList>
            <person name="Banci L."/>
            <person name="Bertini I."/>
            <person name="Ciofi-Baffoni S."/>
            <person name="Boscaro F."/>
            <person name="Chatzi A."/>
            <person name="Mikolajczyk M."/>
            <person name="Tokatlidis K."/>
            <person name="Winkelmann J."/>
        </authorList>
    </citation>
    <scope>STRUCTURE BY NMR OF 1-172</scope>
    <scope>COFACTOR</scope>
    <scope>INTERACTION WITH CHCHD4</scope>
    <scope>SUBUNIT</scope>
    <scope>IDENTIFICATION BY MASS SPECTROMETRY</scope>
    <scope>SUBCELLULAR LOCATION</scope>
    <scope>DOMAIN</scope>
</reference>
<reference key="26">
    <citation type="journal article" date="2014" name="Proteins">
        <title>Crystal structure of the N-terminal methyltransferase-like domain of anamorsin.</title>
        <authorList>
            <person name="Song G."/>
            <person name="Cheng C."/>
            <person name="Li Y."/>
            <person name="Shaw N."/>
            <person name="Xiao Z.C."/>
            <person name="Liu Z.J."/>
        </authorList>
    </citation>
    <scope>X-RAY CRYSTALLOGRAPHY (1.80 ANGSTROMS) OF 1-172</scope>
</reference>
<reference key="27">
    <citation type="journal article" date="2018" name="J. Cell Sci.">
        <title>Fe-S cluster coordination of the chromokinesin KIF4A alters its subcellular localization during mitosis.</title>
        <authorList>
            <person name="Ben-Shimon L."/>
            <person name="Paul V.D."/>
            <person name="David-Kadoch G."/>
            <person name="Volpe M."/>
            <person name="Stuempfig M."/>
            <person name="Bill E."/>
            <person name="Muehlenhoff U."/>
            <person name="Lill R."/>
            <person name="Ben-Aroya S."/>
        </authorList>
    </citation>
    <scope>SUBCELLULAR LOCATION</scope>
</reference>
<proteinExistence type="evidence at protein level"/>
<gene>
    <name evidence="3" type="primary">CIAPIN1</name>
    <name type="ORF">CUA001</name>
    <name type="ORF">PRO0915</name>
</gene>
<keyword id="KW-0001">2Fe-2S</keyword>
<keyword id="KW-0002">3D-structure</keyword>
<keyword id="KW-0004">4Fe-4S</keyword>
<keyword id="KW-0025">Alternative splicing</keyword>
<keyword id="KW-0053">Apoptosis</keyword>
<keyword id="KW-0963">Cytoplasm</keyword>
<keyword id="KW-0408">Iron</keyword>
<keyword id="KW-0411">Iron-sulfur</keyword>
<keyword id="KW-0479">Metal-binding</keyword>
<keyword id="KW-0496">Mitochondrion</keyword>
<keyword id="KW-0539">Nucleus</keyword>
<keyword id="KW-0597">Phosphoprotein</keyword>
<keyword id="KW-1267">Proteomics identification</keyword>
<keyword id="KW-1185">Reference proteome</keyword>
<protein>
    <recommendedName>
        <fullName evidence="3">Anamorsin</fullName>
    </recommendedName>
    <alternativeName>
        <fullName evidence="3">Cytokine-induced apoptosis inhibitor 1</fullName>
    </alternativeName>
    <alternativeName>
        <fullName evidence="3">Fe-S cluster assembly protein DRE2 homolog</fullName>
    </alternativeName>
</protein>
<sequence>MADFGISAGQFVAVVWDKSSPVEALKGLVDKLQALTGNEGRVSVENIKQLLQSAHKESSFDIILSGLVPGSTTLHSAEILAEIARILRPGGCLFLKEPVETAVDNNSKVKTASKLCSALTLSGLVEVKELQREPLTPEEVQSVREHLGHESDNLLFVQITGKKPNFEVGSSRQLKLSITKKSSPSVKPAVDPAAAKLWTLSANDMEDDSMDLIDSDELLDPEDLKKPDPASLRAASCGEGKKRKACKNCTCGLAEELEKEKSREQMSSQPKSACGNCYLGDAFRCASCPYLGMPAFKPGEKVLLSDSNLHDA</sequence>
<accession>Q6FI81</accession>
<accession>A8K8B6</accession>
<accession>O75206</accession>
<accession>O75207</accession>
<accession>Q9H0W1</accession>
<accession>Q9P1L7</accession>
<comment type="function">
    <text evidence="1 2 3 7">Component of the cytosolic iron-sulfur (Fe-S) protein assembly (CIA) machinery required for the maturation of extramitochondrial Fe-S proteins. Part of an electron transfer chain functioning in an early step of cytosolic Fe-S biogenesis, facilitating the de novo assembly of a [4Fe-4S] cluster on the scaffold complex NUBP1-NUBP2. Electrons are transferred to CIAPIN1 from NADPH via the FAD- and FMN-containing protein NDOR1 (PubMed:23596212). NDOR1-CIAPIN1 are also required for the assembly of the diferric tyrosyl radical cofactor of ribonucleotide reductase (RNR), probably by providing electrons for reduction during radical cofactor maturation in the catalytic small subunit (By similarity). Has anti-apoptotic effects in the cell. Involved in negative control of cell death upon cytokine withdrawal. Promotes development of hematopoietic cells (By similarity).</text>
</comment>
<comment type="cofactor">
    <cofactor evidence="3 6 7 8 10 11">
        <name>[2Fe-2S] cluster</name>
        <dbReference type="ChEBI" id="CHEBI:190135"/>
    </cofactor>
</comment>
<comment type="cofactor">
    <cofactor evidence="3 12">
        <name>[4Fe-4S] cluster</name>
        <dbReference type="ChEBI" id="CHEBI:49883"/>
    </cofactor>
    <text evidence="3 19">In the presence of oxygen, the A site-bound [2Fe-2S] cluster is labile and the B site-bound [4Fe-4S] cluster is readily converted into a [2Fe-2S] cluster, a reason why recombinant protein is often isolated with a single [2Fe-2S] cluster.</text>
</comment>
<comment type="subunit">
    <text evidence="6 7">Monomer. Interacts with NDOR1; its oxidized form can be reduced by NDOR1. Interacts with CHCHD4 and may be a substrate for CHCHD4 chaperone activity.</text>
</comment>
<comment type="interaction">
    <interactant intactId="EBI-750511">
        <id>Q6FI81</id>
    </interactant>
    <interactant intactId="EBI-1642537">
        <id>Q9H3K6</id>
        <label>BOLA2B</label>
    </interactant>
    <organismsDiffer>false</organismsDiffer>
    <experiments>2</experiments>
</comment>
<comment type="interaction">
    <interactant intactId="EBI-750511">
        <id>Q6FI81</id>
    </interactant>
    <interactant intactId="EBI-1184651">
        <id>P54284</id>
        <label>CACNB3</label>
    </interactant>
    <organismsDiffer>false</organismsDiffer>
    <experiments>6</experiments>
</comment>
<comment type="interaction">
    <interactant intactId="EBI-750511">
        <id>Q6FI81</id>
    </interactant>
    <interactant intactId="EBI-374781">
        <id>O76003</id>
        <label>GLRX3</label>
    </interactant>
    <organismsDiffer>false</organismsDiffer>
    <experiments>24</experiments>
</comment>
<comment type="interaction">
    <interactant intactId="EBI-750511">
        <id>Q6FI81</id>
    </interactant>
    <interactant intactId="EBI-748397">
        <id>P50222</id>
        <label>MEOX2</label>
    </interactant>
    <organismsDiffer>false</organismsDiffer>
    <experiments>3</experiments>
</comment>
<comment type="interaction">
    <interactant intactId="EBI-750511">
        <id>Q6FI81</id>
    </interactant>
    <interactant intactId="EBI-10249760">
        <id>Q9UHB4</id>
        <label>NDOR1</label>
    </interactant>
    <organismsDiffer>false</organismsDiffer>
    <experiments>16</experiments>
</comment>
<comment type="interaction">
    <interactant intactId="EBI-16172762">
        <id>Q6FI81-1</id>
    </interactant>
    <interactant intactId="EBI-374781">
        <id>O76003</id>
        <label>GLRX3</label>
    </interactant>
    <organismsDiffer>false</organismsDiffer>
    <experiments>2</experiments>
</comment>
<comment type="subcellular location">
    <subcellularLocation>
        <location evidence="3 5 13">Cytoplasm</location>
    </subcellularLocation>
    <subcellularLocation>
        <location evidence="3 5">Nucleus</location>
    </subcellularLocation>
    <subcellularLocation>
        <location evidence="3 6">Mitochondrion intermembrane space</location>
    </subcellularLocation>
</comment>
<comment type="alternative products">
    <event type="alternative splicing"/>
    <isoform>
        <id>Q6FI81-1</id>
        <name>1</name>
        <sequence type="displayed"/>
    </isoform>
    <isoform>
        <id>Q6FI81-2</id>
        <name>2</name>
        <sequence type="described" ref="VSP_012360"/>
    </isoform>
    <isoform>
        <id>Q6FI81-3</id>
        <name>3</name>
        <sequence type="described" ref="VSP_012361"/>
    </isoform>
</comment>
<comment type="tissue specificity">
    <text evidence="4">Ubiquitously expressed. Highly expressed in heart, liver and pancreas.</text>
</comment>
<comment type="domain">
    <text evidence="3">The twin Cx2C motifs are involved in the recognition by the mitochondrial CHCHD4/MIA40-GFER/ERV1 disulfide relay system. The formation of 2 disulfide bonds in the Cx2C motifs through dithiol/disulfide exchange reactions effectively traps the protein in the mitochondrial intermembrane space.</text>
</comment>
<comment type="domain">
    <text evidence="3">The C-terminal domain binds 2 Fe-S clusters but is otherwise mostly in an intrinsically disordered conformation.</text>
</comment>
<comment type="domain">
    <text evidence="3 6 9">The N-terminal domain has structural similarity with S-adenosyl-L-methionine-dependent methyltransferases, but does not bind S-adenosyl-L-methionine. It is required for correct assembly of the 2 Fe-S clusters.</text>
</comment>
<comment type="miscellaneous">
    <text>'Ana-mors-in' means 'anti-death molecule' in Latin.</text>
</comment>
<comment type="similarity">
    <text evidence="3">Belongs to the anamorsin family.</text>
</comment>
<comment type="sequence caution" evidence="18">
    <conflict type="erroneous gene model prediction">
        <sequence resource="EMBL-CDS" id="AAC24312"/>
    </conflict>
</comment>